<geneLocation type="chloroplast"/>
<dbReference type="EMBL" id="DQ923117">
    <property type="protein sequence ID" value="ABI49847.1"/>
    <property type="molecule type" value="Genomic_DNA"/>
</dbReference>
<dbReference type="RefSeq" id="YP_740634.1">
    <property type="nucleotide sequence ID" value="NC_008336.1"/>
</dbReference>
<dbReference type="SMR" id="Q09FX7"/>
<dbReference type="GeneID" id="4271621"/>
<dbReference type="GO" id="GO:0009535">
    <property type="term" value="C:chloroplast thylakoid membrane"/>
    <property type="evidence" value="ECO:0007669"/>
    <property type="project" value="UniProtKB-SubCell"/>
</dbReference>
<dbReference type="GO" id="GO:0009539">
    <property type="term" value="C:photosystem II reaction center"/>
    <property type="evidence" value="ECO:0007669"/>
    <property type="project" value="InterPro"/>
</dbReference>
<dbReference type="GO" id="GO:0015979">
    <property type="term" value="P:photosynthesis"/>
    <property type="evidence" value="ECO:0007669"/>
    <property type="project" value="UniProtKB-UniRule"/>
</dbReference>
<dbReference type="HAMAP" id="MF_01316">
    <property type="entry name" value="PSII_PsbI"/>
    <property type="match status" value="1"/>
</dbReference>
<dbReference type="InterPro" id="IPR003686">
    <property type="entry name" value="PSII_PsbI"/>
</dbReference>
<dbReference type="InterPro" id="IPR037271">
    <property type="entry name" value="PSII_PsbI_sf"/>
</dbReference>
<dbReference type="NCBIfam" id="NF002735">
    <property type="entry name" value="PRK02655.1"/>
    <property type="match status" value="1"/>
</dbReference>
<dbReference type="PANTHER" id="PTHR35772">
    <property type="entry name" value="PHOTOSYSTEM II REACTION CENTER PROTEIN I"/>
    <property type="match status" value="1"/>
</dbReference>
<dbReference type="PANTHER" id="PTHR35772:SF1">
    <property type="entry name" value="PHOTOSYSTEM II REACTION CENTER PROTEIN I"/>
    <property type="match status" value="1"/>
</dbReference>
<dbReference type="Pfam" id="PF02532">
    <property type="entry name" value="PsbI"/>
    <property type="match status" value="1"/>
</dbReference>
<dbReference type="SUPFAM" id="SSF161041">
    <property type="entry name" value="Photosystem II reaction center protein I, PsbI"/>
    <property type="match status" value="1"/>
</dbReference>
<proteinExistence type="inferred from homology"/>
<sequence>MLTLKLFVYTVVIFFVSLFIFGFLSNDPGRNPGREE</sequence>
<accession>Q09FX7</accession>
<gene>
    <name evidence="1" type="primary">psbI</name>
</gene>
<feature type="chain" id="PRO_0000298322" description="Photosystem II reaction center protein I">
    <location>
        <begin position="1"/>
        <end position="36"/>
    </location>
</feature>
<feature type="transmembrane region" description="Helical" evidence="1">
    <location>
        <begin position="4"/>
        <end position="24"/>
    </location>
</feature>
<comment type="function">
    <text evidence="1">One of the components of the core complex of photosystem II (PSII), required for its stability and/or assembly. PSII is a light-driven water:plastoquinone oxidoreductase that uses light energy to abstract electrons from H(2)O, generating O(2) and a proton gradient subsequently used for ATP formation. It consists of a core antenna complex that captures photons, and an electron transfer chain that converts photonic excitation into a charge separation.</text>
</comment>
<comment type="subunit">
    <text evidence="1">PSII is composed of 1 copy each of membrane proteins PsbA, PsbB, PsbC, PsbD, PsbE, PsbF, PsbH, PsbI, PsbJ, PsbK, PsbL, PsbM, PsbT, PsbX, PsbY, PsbZ, Psb30/Ycf12, at least 3 peripheral proteins of the oxygen-evolving complex and a large number of cofactors. It forms dimeric complexes.</text>
</comment>
<comment type="subcellular location">
    <subcellularLocation>
        <location evidence="1">Plastid</location>
        <location evidence="1">Chloroplast thylakoid membrane</location>
        <topology evidence="1">Single-pass membrane protein</topology>
    </subcellularLocation>
</comment>
<comment type="similarity">
    <text evidence="1">Belongs to the PsbI family.</text>
</comment>
<reference key="1">
    <citation type="journal article" date="2006" name="BMC Plant Biol.">
        <title>Rapid and accurate pyrosequencing of angiosperm plastid genomes.</title>
        <authorList>
            <person name="Moore M.J."/>
            <person name="Dhingra A."/>
            <person name="Soltis P.S."/>
            <person name="Shaw R."/>
            <person name="Farmerie W.G."/>
            <person name="Folta K.M."/>
            <person name="Soltis D.E."/>
        </authorList>
    </citation>
    <scope>NUCLEOTIDE SEQUENCE [LARGE SCALE GENOMIC DNA]</scope>
</reference>
<protein>
    <recommendedName>
        <fullName evidence="1">Photosystem II reaction center protein I</fullName>
        <shortName evidence="1">PSII-I</shortName>
    </recommendedName>
    <alternativeName>
        <fullName evidence="1">PSII 4.8 kDa protein</fullName>
    </alternativeName>
</protein>
<name>PSBI_NANDO</name>
<keyword id="KW-0150">Chloroplast</keyword>
<keyword id="KW-0472">Membrane</keyword>
<keyword id="KW-0602">Photosynthesis</keyword>
<keyword id="KW-0604">Photosystem II</keyword>
<keyword id="KW-0934">Plastid</keyword>
<keyword id="KW-0674">Reaction center</keyword>
<keyword id="KW-0793">Thylakoid</keyword>
<keyword id="KW-0812">Transmembrane</keyword>
<keyword id="KW-1133">Transmembrane helix</keyword>
<evidence type="ECO:0000255" key="1">
    <source>
        <dbReference type="HAMAP-Rule" id="MF_01316"/>
    </source>
</evidence>
<organism>
    <name type="scientific">Nandina domestica</name>
    <name type="common">Heavenly bamboo</name>
    <dbReference type="NCBI Taxonomy" id="41776"/>
    <lineage>
        <taxon>Eukaryota</taxon>
        <taxon>Viridiplantae</taxon>
        <taxon>Streptophyta</taxon>
        <taxon>Embryophyta</taxon>
        <taxon>Tracheophyta</taxon>
        <taxon>Spermatophyta</taxon>
        <taxon>Magnoliopsida</taxon>
        <taxon>Ranunculales</taxon>
        <taxon>Berberidaceae</taxon>
        <taxon>Nandinoideae</taxon>
        <taxon>Nandineae</taxon>
        <taxon>Nandina</taxon>
    </lineage>
</organism>